<protein>
    <recommendedName>
        <fullName>1-aminocyclopropane-1-carboxylate oxidase</fullName>
        <shortName>ACC oxidase</shortName>
        <ecNumber>1.14.17.4</ecNumber>
    </recommendedName>
    <alternativeName>
        <fullName>Ethylene-forming enzyme</fullName>
        <shortName>EFE</shortName>
    </alternativeName>
</protein>
<dbReference type="EC" id="1.14.17.4"/>
<dbReference type="EMBL" id="AF030410">
    <property type="protein sequence ID" value="AAG43056.1"/>
    <property type="molecule type" value="Genomic_DNA"/>
</dbReference>
<dbReference type="SMR" id="Q9FR99"/>
<dbReference type="UniPathway" id="UPA00384">
    <property type="reaction ID" value="UER00563"/>
</dbReference>
<dbReference type="GO" id="GO:0009815">
    <property type="term" value="F:1-aminocyclopropane-1-carboxylate oxidase activity"/>
    <property type="evidence" value="ECO:0007669"/>
    <property type="project" value="UniProtKB-EC"/>
</dbReference>
<dbReference type="GO" id="GO:0031418">
    <property type="term" value="F:L-ascorbic acid binding"/>
    <property type="evidence" value="ECO:0007669"/>
    <property type="project" value="UniProtKB-KW"/>
</dbReference>
<dbReference type="GO" id="GO:0046872">
    <property type="term" value="F:metal ion binding"/>
    <property type="evidence" value="ECO:0007669"/>
    <property type="project" value="UniProtKB-KW"/>
</dbReference>
<dbReference type="GO" id="GO:0009693">
    <property type="term" value="P:ethylene biosynthetic process"/>
    <property type="evidence" value="ECO:0007669"/>
    <property type="project" value="UniProtKB-UniPathway"/>
</dbReference>
<dbReference type="GO" id="GO:0009835">
    <property type="term" value="P:fruit ripening"/>
    <property type="evidence" value="ECO:0007669"/>
    <property type="project" value="UniProtKB-KW"/>
</dbReference>
<dbReference type="FunFam" id="2.60.120.330:FF:000010">
    <property type="entry name" value="1-aminocyclopropane-1-carboxylate oxidase 1"/>
    <property type="match status" value="1"/>
</dbReference>
<dbReference type="Gene3D" id="2.60.120.330">
    <property type="entry name" value="B-lactam Antibiotic, Isopenicillin N Synthase, Chain"/>
    <property type="match status" value="1"/>
</dbReference>
<dbReference type="InterPro" id="IPR026992">
    <property type="entry name" value="DIOX_N"/>
</dbReference>
<dbReference type="InterPro" id="IPR044861">
    <property type="entry name" value="IPNS-like_FE2OG_OXY"/>
</dbReference>
<dbReference type="InterPro" id="IPR027443">
    <property type="entry name" value="IPNS-like_sf"/>
</dbReference>
<dbReference type="InterPro" id="IPR005123">
    <property type="entry name" value="Oxoglu/Fe-dep_dioxygenase_dom"/>
</dbReference>
<dbReference type="InterPro" id="IPR050295">
    <property type="entry name" value="Plant_2OG-oxidoreductases"/>
</dbReference>
<dbReference type="PANTHER" id="PTHR47991">
    <property type="entry name" value="OXOGLUTARATE/IRON-DEPENDENT DIOXYGENASE"/>
    <property type="match status" value="1"/>
</dbReference>
<dbReference type="Pfam" id="PF03171">
    <property type="entry name" value="2OG-FeII_Oxy"/>
    <property type="match status" value="1"/>
</dbReference>
<dbReference type="Pfam" id="PF14226">
    <property type="entry name" value="DIOX_N"/>
    <property type="match status" value="1"/>
</dbReference>
<dbReference type="SUPFAM" id="SSF51197">
    <property type="entry name" value="Clavaminate synthase-like"/>
    <property type="match status" value="1"/>
</dbReference>
<dbReference type="PROSITE" id="PS51471">
    <property type="entry name" value="FE2OG_OXY"/>
    <property type="match status" value="1"/>
</dbReference>
<sequence>MAIPVIDFSKLDGKERAETMARIANGCEEWGFFQLVNHGIPVELLERVKKVSSECYKLREERFEGSKPVQLLDTLVKEGDGQRLDNVDWEDVFVLQDDNEWPSNPPDFEETMKEYREEIRKLAEKMMEVMDENLGFEKGCIKKAFSGDGQHPPFFGTKVSHYPPCPRLDLVKGLRAHTDAGGVILLFQDDQVGGLQMLKDGRWIDVQPLADAIVINTGDQIEVLSNGRYKSAWHRVLATSHGNRRSIASFYNPSLKATIAPAAGAATEEAAPPALYPKFLFGDYMDVYAKQKYEPKEPRFEAVRAI</sequence>
<gene>
    <name type="primary">MAO1B</name>
</gene>
<accession>Q9FR99</accession>
<reference key="1">
    <citation type="journal article" date="1997" name="Biochem. Mol. Biol. Int.">
        <title>Characterization and expression analysis of a banana gene encoding 1-aminocyclopropane-1-carboxylate oxidase.</title>
        <authorList>
            <person name="Huang P.L."/>
            <person name="Do Y.Y."/>
            <person name="Huang F.C."/>
            <person name="Thay T.S."/>
            <person name="Chang T.W."/>
        </authorList>
    </citation>
    <scope>NUCLEOTIDE SEQUENCE [GENOMIC DNA]</scope>
    <source>
        <strain>cv. Hsien Jin Chiao</strain>
    </source>
</reference>
<proteinExistence type="inferred from homology"/>
<keyword id="KW-0266">Ethylene biosynthesis</keyword>
<keyword id="KW-0292">Fruit ripening</keyword>
<keyword id="KW-0408">Iron</keyword>
<keyword id="KW-0479">Metal-binding</keyword>
<keyword id="KW-0560">Oxidoreductase</keyword>
<keyword id="KW-0847">Vitamin C</keyword>
<comment type="catalytic activity">
    <reaction>
        <text>1-aminocyclopropane-1-carboxylate + L-ascorbate + O2 = ethene + L-dehydroascorbate + hydrogen cyanide + CO2 + 2 H2O</text>
        <dbReference type="Rhea" id="RHEA:23640"/>
        <dbReference type="ChEBI" id="CHEBI:15377"/>
        <dbReference type="ChEBI" id="CHEBI:15379"/>
        <dbReference type="ChEBI" id="CHEBI:16526"/>
        <dbReference type="ChEBI" id="CHEBI:18153"/>
        <dbReference type="ChEBI" id="CHEBI:18407"/>
        <dbReference type="ChEBI" id="CHEBI:38290"/>
        <dbReference type="ChEBI" id="CHEBI:58360"/>
        <dbReference type="ChEBI" id="CHEBI:58539"/>
        <dbReference type="EC" id="1.14.17.4"/>
    </reaction>
</comment>
<comment type="cofactor">
    <cofactor evidence="1">
        <name>Fe cation</name>
        <dbReference type="ChEBI" id="CHEBI:24875"/>
    </cofactor>
</comment>
<comment type="pathway">
    <text>Alkene biosynthesis; ethylene biosynthesis via S-adenosyl-L-methionine; ethylene from S-adenosyl-L-methionine: step 2/2.</text>
</comment>
<comment type="similarity">
    <text evidence="3">Belongs to the iron/ascorbate-dependent oxidoreductase family.</text>
</comment>
<organism>
    <name type="scientific">Musa acuminata</name>
    <name type="common">Banana</name>
    <name type="synonym">Musa cavendishii</name>
    <dbReference type="NCBI Taxonomy" id="4641"/>
    <lineage>
        <taxon>Eukaryota</taxon>
        <taxon>Viridiplantae</taxon>
        <taxon>Streptophyta</taxon>
        <taxon>Embryophyta</taxon>
        <taxon>Tracheophyta</taxon>
        <taxon>Spermatophyta</taxon>
        <taxon>Magnoliopsida</taxon>
        <taxon>Liliopsida</taxon>
        <taxon>Zingiberales</taxon>
        <taxon>Musaceae</taxon>
        <taxon>Musa</taxon>
    </lineage>
</organism>
<name>ACCO_MUSAC</name>
<feature type="chain" id="PRO_0000067267" description="1-aminocyclopropane-1-carboxylate oxidase">
    <location>
        <begin position="1"/>
        <end position="306"/>
    </location>
</feature>
<feature type="domain" description="Fe2OG dioxygenase" evidence="2">
    <location>
        <begin position="153"/>
        <end position="253"/>
    </location>
</feature>
<feature type="binding site" evidence="2">
    <location>
        <position position="177"/>
    </location>
    <ligand>
        <name>Fe cation</name>
        <dbReference type="ChEBI" id="CHEBI:24875"/>
    </ligand>
</feature>
<feature type="binding site" evidence="2">
    <location>
        <position position="179"/>
    </location>
    <ligand>
        <name>Fe cation</name>
        <dbReference type="ChEBI" id="CHEBI:24875"/>
    </ligand>
</feature>
<feature type="binding site" evidence="2">
    <location>
        <position position="234"/>
    </location>
    <ligand>
        <name>Fe cation</name>
        <dbReference type="ChEBI" id="CHEBI:24875"/>
    </ligand>
</feature>
<evidence type="ECO:0000250" key="1"/>
<evidence type="ECO:0000255" key="2">
    <source>
        <dbReference type="PROSITE-ProRule" id="PRU00805"/>
    </source>
</evidence>
<evidence type="ECO:0000305" key="3"/>